<organism>
    <name type="scientific">Dehalococcoides mccartyi (strain CBDB1)</name>
    <dbReference type="NCBI Taxonomy" id="255470"/>
    <lineage>
        <taxon>Bacteria</taxon>
        <taxon>Bacillati</taxon>
        <taxon>Chloroflexota</taxon>
        <taxon>Dehalococcoidia</taxon>
        <taxon>Dehalococcoidales</taxon>
        <taxon>Dehalococcoidaceae</taxon>
        <taxon>Dehalococcoides</taxon>
    </lineage>
</organism>
<sequence length="373" mass="40103">MNENCYKRVVIKLGTSLLTGGTGKLDHERMADLCRQIAELTRLGTEIVIVSSGAIAAGRSKMGIRHIPKDVPFKQVLAAIGQSQLMNYYDQLFSPHGLTVAQGLLTKSDLSDRSGYLNARNTLLALMELGIITIVNENDVVAIDEIQQAKFGDNDNLSAMVANLIEADLLLILTNIRGLYTSDPTLHPEATLITEVKEITEELEQLAAGSSNKLGTGGMVTKLEAARLATSSGVTAIIADGHIPDIILKLANGENEGTRFIPSLHKPDSRQRWMMSGLCTRGSICVDDGAAKALRENQKSLLAAGVQQAEGKFGRGDIVKLTDSHGKRLGYGITNYSSDDISKIKGLHSQELNAVLGGNQGPEVIHRNNLVVI</sequence>
<comment type="function">
    <text evidence="1">Catalyzes the transfer of a phosphate group to glutamate to form L-glutamate 5-phosphate.</text>
</comment>
<comment type="catalytic activity">
    <reaction evidence="1">
        <text>L-glutamate + ATP = L-glutamyl 5-phosphate + ADP</text>
        <dbReference type="Rhea" id="RHEA:14877"/>
        <dbReference type="ChEBI" id="CHEBI:29985"/>
        <dbReference type="ChEBI" id="CHEBI:30616"/>
        <dbReference type="ChEBI" id="CHEBI:58274"/>
        <dbReference type="ChEBI" id="CHEBI:456216"/>
        <dbReference type="EC" id="2.7.2.11"/>
    </reaction>
</comment>
<comment type="pathway">
    <text evidence="1">Amino-acid biosynthesis; L-proline biosynthesis; L-glutamate 5-semialdehyde from L-glutamate: step 1/2.</text>
</comment>
<comment type="subcellular location">
    <subcellularLocation>
        <location evidence="1">Cytoplasm</location>
    </subcellularLocation>
</comment>
<comment type="similarity">
    <text evidence="1">Belongs to the glutamate 5-kinase family.</text>
</comment>
<gene>
    <name evidence="1" type="primary">proB</name>
    <name type="ordered locus">cbdbA1212</name>
</gene>
<evidence type="ECO:0000255" key="1">
    <source>
        <dbReference type="HAMAP-Rule" id="MF_00456"/>
    </source>
</evidence>
<dbReference type="EC" id="2.7.2.11" evidence="1"/>
<dbReference type="EMBL" id="AJ965256">
    <property type="protein sequence ID" value="CAI83289.1"/>
    <property type="molecule type" value="Genomic_DNA"/>
</dbReference>
<dbReference type="RefSeq" id="WP_011309640.1">
    <property type="nucleotide sequence ID" value="NC_007356.1"/>
</dbReference>
<dbReference type="SMR" id="Q3ZYI5"/>
<dbReference type="KEGG" id="deh:cbdbA1212"/>
<dbReference type="HOGENOM" id="CLU_025400_2_0_0"/>
<dbReference type="UniPathway" id="UPA00098">
    <property type="reaction ID" value="UER00359"/>
</dbReference>
<dbReference type="Proteomes" id="UP000000433">
    <property type="component" value="Chromosome"/>
</dbReference>
<dbReference type="GO" id="GO:0005829">
    <property type="term" value="C:cytosol"/>
    <property type="evidence" value="ECO:0007669"/>
    <property type="project" value="TreeGrafter"/>
</dbReference>
<dbReference type="GO" id="GO:0005524">
    <property type="term" value="F:ATP binding"/>
    <property type="evidence" value="ECO:0007669"/>
    <property type="project" value="UniProtKB-KW"/>
</dbReference>
<dbReference type="GO" id="GO:0004349">
    <property type="term" value="F:glutamate 5-kinase activity"/>
    <property type="evidence" value="ECO:0007669"/>
    <property type="project" value="UniProtKB-UniRule"/>
</dbReference>
<dbReference type="GO" id="GO:0003723">
    <property type="term" value="F:RNA binding"/>
    <property type="evidence" value="ECO:0007669"/>
    <property type="project" value="InterPro"/>
</dbReference>
<dbReference type="GO" id="GO:0055129">
    <property type="term" value="P:L-proline biosynthetic process"/>
    <property type="evidence" value="ECO:0007669"/>
    <property type="project" value="UniProtKB-UniRule"/>
</dbReference>
<dbReference type="CDD" id="cd04242">
    <property type="entry name" value="AAK_G5K_ProB"/>
    <property type="match status" value="1"/>
</dbReference>
<dbReference type="CDD" id="cd21157">
    <property type="entry name" value="PUA_G5K"/>
    <property type="match status" value="1"/>
</dbReference>
<dbReference type="FunFam" id="2.30.130.10:FF:000007">
    <property type="entry name" value="Glutamate 5-kinase"/>
    <property type="match status" value="1"/>
</dbReference>
<dbReference type="FunFam" id="3.40.1160.10:FF:000018">
    <property type="entry name" value="Glutamate 5-kinase"/>
    <property type="match status" value="1"/>
</dbReference>
<dbReference type="Gene3D" id="3.40.1160.10">
    <property type="entry name" value="Acetylglutamate kinase-like"/>
    <property type="match status" value="1"/>
</dbReference>
<dbReference type="Gene3D" id="2.30.130.10">
    <property type="entry name" value="PUA domain"/>
    <property type="match status" value="1"/>
</dbReference>
<dbReference type="HAMAP" id="MF_00456">
    <property type="entry name" value="ProB"/>
    <property type="match status" value="1"/>
</dbReference>
<dbReference type="InterPro" id="IPR036393">
    <property type="entry name" value="AceGlu_kinase-like_sf"/>
</dbReference>
<dbReference type="InterPro" id="IPR001048">
    <property type="entry name" value="Asp/Glu/Uridylate_kinase"/>
</dbReference>
<dbReference type="InterPro" id="IPR041739">
    <property type="entry name" value="G5K_ProB"/>
</dbReference>
<dbReference type="InterPro" id="IPR001057">
    <property type="entry name" value="Glu/AcGlu_kinase"/>
</dbReference>
<dbReference type="InterPro" id="IPR011529">
    <property type="entry name" value="Glu_5kinase"/>
</dbReference>
<dbReference type="InterPro" id="IPR005715">
    <property type="entry name" value="Glu_5kinase/COase_Synthase"/>
</dbReference>
<dbReference type="InterPro" id="IPR019797">
    <property type="entry name" value="Glutamate_5-kinase_CS"/>
</dbReference>
<dbReference type="InterPro" id="IPR002478">
    <property type="entry name" value="PUA"/>
</dbReference>
<dbReference type="InterPro" id="IPR015947">
    <property type="entry name" value="PUA-like_sf"/>
</dbReference>
<dbReference type="InterPro" id="IPR036974">
    <property type="entry name" value="PUA_sf"/>
</dbReference>
<dbReference type="NCBIfam" id="TIGR01027">
    <property type="entry name" value="proB"/>
    <property type="match status" value="1"/>
</dbReference>
<dbReference type="PANTHER" id="PTHR43654">
    <property type="entry name" value="GLUTAMATE 5-KINASE"/>
    <property type="match status" value="1"/>
</dbReference>
<dbReference type="PANTHER" id="PTHR43654:SF1">
    <property type="entry name" value="ISOPENTENYL PHOSPHATE KINASE"/>
    <property type="match status" value="1"/>
</dbReference>
<dbReference type="Pfam" id="PF00696">
    <property type="entry name" value="AA_kinase"/>
    <property type="match status" value="1"/>
</dbReference>
<dbReference type="Pfam" id="PF01472">
    <property type="entry name" value="PUA"/>
    <property type="match status" value="1"/>
</dbReference>
<dbReference type="PIRSF" id="PIRSF000729">
    <property type="entry name" value="GK"/>
    <property type="match status" value="1"/>
</dbReference>
<dbReference type="PRINTS" id="PR00474">
    <property type="entry name" value="GLU5KINASE"/>
</dbReference>
<dbReference type="SMART" id="SM00359">
    <property type="entry name" value="PUA"/>
    <property type="match status" value="1"/>
</dbReference>
<dbReference type="SUPFAM" id="SSF53633">
    <property type="entry name" value="Carbamate kinase-like"/>
    <property type="match status" value="1"/>
</dbReference>
<dbReference type="SUPFAM" id="SSF88697">
    <property type="entry name" value="PUA domain-like"/>
    <property type="match status" value="1"/>
</dbReference>
<dbReference type="PROSITE" id="PS00902">
    <property type="entry name" value="GLUTAMATE_5_KINASE"/>
    <property type="match status" value="1"/>
</dbReference>
<dbReference type="PROSITE" id="PS50890">
    <property type="entry name" value="PUA"/>
    <property type="match status" value="1"/>
</dbReference>
<accession>Q3ZYI5</accession>
<name>PROB_DEHMC</name>
<reference key="1">
    <citation type="journal article" date="2005" name="Nat. Biotechnol.">
        <title>Genome sequence of the chlorinated compound-respiring bacterium Dehalococcoides species strain CBDB1.</title>
        <authorList>
            <person name="Kube M."/>
            <person name="Beck A."/>
            <person name="Zinder S.H."/>
            <person name="Kuhl H."/>
            <person name="Reinhardt R."/>
            <person name="Adrian L."/>
        </authorList>
    </citation>
    <scope>NUCLEOTIDE SEQUENCE [LARGE SCALE GENOMIC DNA]</scope>
    <source>
        <strain>CBDB1</strain>
    </source>
</reference>
<keyword id="KW-0028">Amino-acid biosynthesis</keyword>
<keyword id="KW-0067">ATP-binding</keyword>
<keyword id="KW-0963">Cytoplasm</keyword>
<keyword id="KW-0418">Kinase</keyword>
<keyword id="KW-0547">Nucleotide-binding</keyword>
<keyword id="KW-0641">Proline biosynthesis</keyword>
<keyword id="KW-0808">Transferase</keyword>
<feature type="chain" id="PRO_0000230044" description="Glutamate 5-kinase">
    <location>
        <begin position="1"/>
        <end position="373"/>
    </location>
</feature>
<feature type="domain" description="PUA" evidence="1">
    <location>
        <begin position="281"/>
        <end position="359"/>
    </location>
</feature>
<feature type="binding site" evidence="1">
    <location>
        <position position="12"/>
    </location>
    <ligand>
        <name>ATP</name>
        <dbReference type="ChEBI" id="CHEBI:30616"/>
    </ligand>
</feature>
<feature type="binding site" evidence="1">
    <location>
        <position position="52"/>
    </location>
    <ligand>
        <name>substrate</name>
    </ligand>
</feature>
<feature type="binding site" evidence="1">
    <location>
        <position position="139"/>
    </location>
    <ligand>
        <name>substrate</name>
    </ligand>
</feature>
<feature type="binding site" evidence="1">
    <location>
        <position position="154"/>
    </location>
    <ligand>
        <name>substrate</name>
    </ligand>
</feature>
<feature type="binding site" evidence="1">
    <location>
        <begin position="216"/>
        <end position="222"/>
    </location>
    <ligand>
        <name>ATP</name>
        <dbReference type="ChEBI" id="CHEBI:30616"/>
    </ligand>
</feature>
<protein>
    <recommendedName>
        <fullName evidence="1">Glutamate 5-kinase</fullName>
        <ecNumber evidence="1">2.7.2.11</ecNumber>
    </recommendedName>
    <alternativeName>
        <fullName evidence="1">Gamma-glutamyl kinase</fullName>
        <shortName evidence="1">GK</shortName>
    </alternativeName>
</protein>
<proteinExistence type="inferred from homology"/>